<comment type="function">
    <text evidence="1">Usually encoded in the trnK tRNA gene intron. Probably assists in splicing its own and other chloroplast group II introns.</text>
</comment>
<comment type="subcellular location">
    <subcellularLocation>
        <location>Plastid</location>
        <location>Chloroplast</location>
    </subcellularLocation>
</comment>
<comment type="similarity">
    <text evidence="1">Belongs to the intron maturase 2 family. MatK subfamily.</text>
</comment>
<accession>Q9MSS1</accession>
<keyword id="KW-0150">Chloroplast</keyword>
<keyword id="KW-0507">mRNA processing</keyword>
<keyword id="KW-0934">Plastid</keyword>
<keyword id="KW-0694">RNA-binding</keyword>
<keyword id="KW-0819">tRNA processing</keyword>
<organism>
    <name type="scientific">Thuja plicata</name>
    <name type="common">Western red-cedar</name>
    <name type="synonym">Giant arborvitae</name>
    <dbReference type="NCBI Taxonomy" id="3316"/>
    <lineage>
        <taxon>Eukaryota</taxon>
        <taxon>Viridiplantae</taxon>
        <taxon>Streptophyta</taxon>
        <taxon>Embryophyta</taxon>
        <taxon>Tracheophyta</taxon>
        <taxon>Spermatophyta</taxon>
        <taxon>Pinopsida</taxon>
        <taxon>Pinidae</taxon>
        <taxon>Conifers II</taxon>
        <taxon>Cupressales</taxon>
        <taxon>Cupressaceae</taxon>
        <taxon>Thuja</taxon>
    </lineage>
</organism>
<gene>
    <name evidence="1" type="primary">matK</name>
</gene>
<proteinExistence type="inferred from homology"/>
<protein>
    <recommendedName>
        <fullName evidence="1">Maturase K</fullName>
    </recommendedName>
    <alternativeName>
        <fullName evidence="1">Intron maturase</fullName>
    </alternativeName>
</protein>
<geneLocation type="chloroplast"/>
<reference key="1">
    <citation type="journal article" date="2000" name="Am. J. Bot.">
        <title>Relationships within Cupressaceae sensu lato: a combined morphological and molecular approach.</title>
        <authorList>
            <person name="Gadek P.A."/>
            <person name="Alpers D.L."/>
            <person name="Heslewood M.M."/>
            <person name="Quinn C.J."/>
        </authorList>
    </citation>
    <scope>NUCLEOTIDE SEQUENCE [GENOMIC DNA]</scope>
</reference>
<evidence type="ECO:0000255" key="1">
    <source>
        <dbReference type="HAMAP-Rule" id="MF_01390"/>
    </source>
</evidence>
<feature type="chain" id="PRO_0000143736" description="Maturase K">
    <location>
        <begin position="1"/>
        <end position="510"/>
    </location>
</feature>
<dbReference type="EMBL" id="AF152216">
    <property type="protein sequence ID" value="AAF25769.1"/>
    <property type="molecule type" value="Genomic_DNA"/>
</dbReference>
<dbReference type="GO" id="GO:0009507">
    <property type="term" value="C:chloroplast"/>
    <property type="evidence" value="ECO:0007669"/>
    <property type="project" value="UniProtKB-SubCell"/>
</dbReference>
<dbReference type="GO" id="GO:0003723">
    <property type="term" value="F:RNA binding"/>
    <property type="evidence" value="ECO:0007669"/>
    <property type="project" value="UniProtKB-KW"/>
</dbReference>
<dbReference type="GO" id="GO:0006397">
    <property type="term" value="P:mRNA processing"/>
    <property type="evidence" value="ECO:0007669"/>
    <property type="project" value="UniProtKB-KW"/>
</dbReference>
<dbReference type="GO" id="GO:0008380">
    <property type="term" value="P:RNA splicing"/>
    <property type="evidence" value="ECO:0007669"/>
    <property type="project" value="UniProtKB-UniRule"/>
</dbReference>
<dbReference type="GO" id="GO:0008033">
    <property type="term" value="P:tRNA processing"/>
    <property type="evidence" value="ECO:0007669"/>
    <property type="project" value="UniProtKB-KW"/>
</dbReference>
<dbReference type="HAMAP" id="MF_01390">
    <property type="entry name" value="MatK"/>
    <property type="match status" value="1"/>
</dbReference>
<dbReference type="InterPro" id="IPR024937">
    <property type="entry name" value="Domain_X"/>
</dbReference>
<dbReference type="InterPro" id="IPR002866">
    <property type="entry name" value="Maturase_MatK"/>
</dbReference>
<dbReference type="InterPro" id="IPR024942">
    <property type="entry name" value="Maturase_MatK_N"/>
</dbReference>
<dbReference type="PANTHER" id="PTHR34811">
    <property type="entry name" value="MATURASE K"/>
    <property type="match status" value="1"/>
</dbReference>
<dbReference type="PANTHER" id="PTHR34811:SF1">
    <property type="entry name" value="MATURASE K"/>
    <property type="match status" value="1"/>
</dbReference>
<dbReference type="Pfam" id="PF01348">
    <property type="entry name" value="Intron_maturas2"/>
    <property type="match status" value="1"/>
</dbReference>
<dbReference type="Pfam" id="PF01824">
    <property type="entry name" value="MatK_N"/>
    <property type="match status" value="1"/>
</dbReference>
<sequence length="510" mass="60944">MDEFQRXSNKHXXWQQLFLXPLFFREDLXAIGHDHHLDRSGSSEPTEIFFSHFFSFLTVKRSIRRIRKQNKSISLFGNSDSNKLIEYNKNFSFKSMLEGFTIVLEVSIAMRSKHFIKGMDGWNXLRSIHCIFPFMEDKLPHSNYISDIRVPYSIHPEILVRIFRRWIRDVPSLHLLRLILHEWKNSFSQENLEKXXLITQRGNTRFSLFLWNSYVYECESFLIPLIKRFFNPXSLLYGSFPDGIHXEKKIKDIVIFLLQKISTKKIWLLKDSFIHYVRYGERSLIALKGTHLQVKKCRYHLFHFWQYYFHLWFQPYRICSLELSKTSFSFLGFFLNVKMRPLVVRAKMLDDLFITDLITNELNPIAPIRSILFSLAKEKFCDISGWPISKLSWTSLSDDDILDRFDRIWINLFHYYSGSINQDGLYHIKYILLLSCAKTLACKHKSTIRVVREQLGSELFTNSFSKEREFISSSFSKTRSQRERIWNSEISQRNPLXXFWQKMENKQIEN</sequence>
<name>MATK_THUPL</name>